<evidence type="ECO:0000255" key="1">
    <source>
        <dbReference type="HAMAP-Rule" id="MF_00360"/>
    </source>
</evidence>
<evidence type="ECO:0000256" key="2">
    <source>
        <dbReference type="SAM" id="MobiDB-lite"/>
    </source>
</evidence>
<evidence type="ECO:0000305" key="3"/>
<sequence>MIKKYEVMYILDQDLKDTKELVAKLDGILSEGGQILESNDLGLLDFTYEINHKKKGFYHIVIVQATTQAIKEFERIAKIDKNVVRTLVLNTQNIQNYEQSVVLSKTDMTKFEEEQREKKNFRKPFIKREEAATKENK</sequence>
<name>RS6_MYCCT</name>
<organism>
    <name type="scientific">Mycoplasma capricolum subsp. capricolum (strain California kid / ATCC 27343 / NCTC 10154)</name>
    <dbReference type="NCBI Taxonomy" id="340047"/>
    <lineage>
        <taxon>Bacteria</taxon>
        <taxon>Bacillati</taxon>
        <taxon>Mycoplasmatota</taxon>
        <taxon>Mollicutes</taxon>
        <taxon>Mycoplasmataceae</taxon>
        <taxon>Mycoplasma</taxon>
    </lineage>
</organism>
<gene>
    <name evidence="1" type="primary">rpsF</name>
    <name type="ordered locus">MCAP_0024</name>
</gene>
<feature type="chain" id="PRO_0000229550" description="Small ribosomal subunit protein bS6">
    <location>
        <begin position="1"/>
        <end position="137"/>
    </location>
</feature>
<feature type="region of interest" description="Disordered" evidence="2">
    <location>
        <begin position="113"/>
        <end position="137"/>
    </location>
</feature>
<feature type="compositionally biased region" description="Basic and acidic residues" evidence="2">
    <location>
        <begin position="126"/>
        <end position="137"/>
    </location>
</feature>
<comment type="function">
    <text evidence="1">Binds together with bS18 to 16S ribosomal RNA.</text>
</comment>
<comment type="similarity">
    <text evidence="1">Belongs to the bacterial ribosomal protein bS6 family.</text>
</comment>
<protein>
    <recommendedName>
        <fullName evidence="1">Small ribosomal subunit protein bS6</fullName>
    </recommendedName>
    <alternativeName>
        <fullName evidence="3">30S ribosomal protein S6</fullName>
    </alternativeName>
</protein>
<reference key="1">
    <citation type="submission" date="2005-09" db="EMBL/GenBank/DDBJ databases">
        <authorList>
            <person name="Glass J.I."/>
            <person name="Lartigue C."/>
            <person name="Pfannkoch C."/>
            <person name="Baden-Tillson H."/>
            <person name="Smith H.O."/>
            <person name="Venter J.C."/>
            <person name="Roske K."/>
            <person name="Wise K.S."/>
            <person name="Calcutt M.J."/>
            <person name="Nelson W.C."/>
            <person name="Nierman W.C."/>
        </authorList>
    </citation>
    <scope>NUCLEOTIDE SEQUENCE [LARGE SCALE GENOMIC DNA]</scope>
    <source>
        <strain>California kid / ATCC 27343 / NCTC 10154</strain>
    </source>
</reference>
<keyword id="KW-0687">Ribonucleoprotein</keyword>
<keyword id="KW-0689">Ribosomal protein</keyword>
<keyword id="KW-0694">RNA-binding</keyword>
<keyword id="KW-0699">rRNA-binding</keyword>
<accession>Q2ST91</accession>
<dbReference type="EMBL" id="CP000123">
    <property type="protein sequence ID" value="ABC01145.1"/>
    <property type="molecule type" value="Genomic_DNA"/>
</dbReference>
<dbReference type="RefSeq" id="WP_011386927.1">
    <property type="nucleotide sequence ID" value="NC_007633.1"/>
</dbReference>
<dbReference type="SMR" id="Q2ST91"/>
<dbReference type="GeneID" id="23779021"/>
<dbReference type="KEGG" id="mcp:MCAP_0024"/>
<dbReference type="HOGENOM" id="CLU_113441_1_0_14"/>
<dbReference type="PhylomeDB" id="Q2ST91"/>
<dbReference type="Proteomes" id="UP000001928">
    <property type="component" value="Chromosome"/>
</dbReference>
<dbReference type="GO" id="GO:0005737">
    <property type="term" value="C:cytoplasm"/>
    <property type="evidence" value="ECO:0007669"/>
    <property type="project" value="UniProtKB-ARBA"/>
</dbReference>
<dbReference type="GO" id="GO:1990904">
    <property type="term" value="C:ribonucleoprotein complex"/>
    <property type="evidence" value="ECO:0007669"/>
    <property type="project" value="UniProtKB-KW"/>
</dbReference>
<dbReference type="GO" id="GO:0005840">
    <property type="term" value="C:ribosome"/>
    <property type="evidence" value="ECO:0007669"/>
    <property type="project" value="UniProtKB-KW"/>
</dbReference>
<dbReference type="GO" id="GO:0070181">
    <property type="term" value="F:small ribosomal subunit rRNA binding"/>
    <property type="evidence" value="ECO:0007669"/>
    <property type="project" value="TreeGrafter"/>
</dbReference>
<dbReference type="GO" id="GO:0003735">
    <property type="term" value="F:structural constituent of ribosome"/>
    <property type="evidence" value="ECO:0007669"/>
    <property type="project" value="InterPro"/>
</dbReference>
<dbReference type="GO" id="GO:0006412">
    <property type="term" value="P:translation"/>
    <property type="evidence" value="ECO:0007669"/>
    <property type="project" value="UniProtKB-UniRule"/>
</dbReference>
<dbReference type="CDD" id="cd00473">
    <property type="entry name" value="bS6"/>
    <property type="match status" value="1"/>
</dbReference>
<dbReference type="Gene3D" id="3.30.70.60">
    <property type="match status" value="1"/>
</dbReference>
<dbReference type="HAMAP" id="MF_00360">
    <property type="entry name" value="Ribosomal_bS6"/>
    <property type="match status" value="1"/>
</dbReference>
<dbReference type="InterPro" id="IPR000529">
    <property type="entry name" value="Ribosomal_bS6"/>
</dbReference>
<dbReference type="InterPro" id="IPR035980">
    <property type="entry name" value="Ribosomal_bS6_sf"/>
</dbReference>
<dbReference type="InterPro" id="IPR020814">
    <property type="entry name" value="Ribosomal_S6_plastid/chlpt"/>
</dbReference>
<dbReference type="InterPro" id="IPR014717">
    <property type="entry name" value="Transl_elong_EF1B/ribsomal_bS6"/>
</dbReference>
<dbReference type="NCBIfam" id="TIGR00166">
    <property type="entry name" value="S6"/>
    <property type="match status" value="1"/>
</dbReference>
<dbReference type="PANTHER" id="PTHR21011">
    <property type="entry name" value="MITOCHONDRIAL 28S RIBOSOMAL PROTEIN S6"/>
    <property type="match status" value="1"/>
</dbReference>
<dbReference type="PANTHER" id="PTHR21011:SF1">
    <property type="entry name" value="SMALL RIBOSOMAL SUBUNIT PROTEIN BS6M"/>
    <property type="match status" value="1"/>
</dbReference>
<dbReference type="Pfam" id="PF01250">
    <property type="entry name" value="Ribosomal_S6"/>
    <property type="match status" value="1"/>
</dbReference>
<dbReference type="SUPFAM" id="SSF54995">
    <property type="entry name" value="Ribosomal protein S6"/>
    <property type="match status" value="1"/>
</dbReference>
<proteinExistence type="inferred from homology"/>